<dbReference type="EC" id="4.2.2.15"/>
<dbReference type="EMBL" id="U46666">
    <property type="protein sequence ID" value="AAC47263.1"/>
    <property type="molecule type" value="mRNA"/>
</dbReference>
<dbReference type="PDB" id="1SLI">
    <property type="method" value="X-ray"/>
    <property type="resolution" value="2.00 A"/>
    <property type="chains" value="A=81-759"/>
</dbReference>
<dbReference type="PDB" id="1SLL">
    <property type="method" value="X-ray"/>
    <property type="resolution" value="2.00 A"/>
    <property type="chains" value="A=81-759"/>
</dbReference>
<dbReference type="PDB" id="2SLI">
    <property type="method" value="X-ray"/>
    <property type="resolution" value="1.80 A"/>
    <property type="chains" value="A=81-759"/>
</dbReference>
<dbReference type="PDB" id="3SLI">
    <property type="method" value="X-ray"/>
    <property type="resolution" value="1.80 A"/>
    <property type="chains" value="A=81-759"/>
</dbReference>
<dbReference type="PDB" id="4SLI">
    <property type="method" value="X-ray"/>
    <property type="resolution" value="1.80 A"/>
    <property type="chains" value="A=81-759"/>
</dbReference>
<dbReference type="PDBsum" id="1SLI"/>
<dbReference type="PDBsum" id="1SLL"/>
<dbReference type="PDBsum" id="2SLI"/>
<dbReference type="PDBsum" id="3SLI"/>
<dbReference type="PDBsum" id="4SLI"/>
<dbReference type="SMR" id="Q27701"/>
<dbReference type="CAZy" id="CBM40">
    <property type="family name" value="Carbohydrate-Binding Module Family 40"/>
</dbReference>
<dbReference type="CAZy" id="GH33">
    <property type="family name" value="Glycoside Hydrolase Family 33"/>
</dbReference>
<dbReference type="EvolutionaryTrace" id="Q27701"/>
<dbReference type="GO" id="GO:0005737">
    <property type="term" value="C:cytoplasm"/>
    <property type="evidence" value="ECO:0007669"/>
    <property type="project" value="TreeGrafter"/>
</dbReference>
<dbReference type="GO" id="GO:0005576">
    <property type="term" value="C:extracellular region"/>
    <property type="evidence" value="ECO:0007669"/>
    <property type="project" value="UniProtKB-SubCell"/>
</dbReference>
<dbReference type="GO" id="GO:0043231">
    <property type="term" value="C:intracellular membrane-bounded organelle"/>
    <property type="evidence" value="ECO:0007669"/>
    <property type="project" value="TreeGrafter"/>
</dbReference>
<dbReference type="GO" id="GO:0016020">
    <property type="term" value="C:membrane"/>
    <property type="evidence" value="ECO:0007669"/>
    <property type="project" value="TreeGrafter"/>
</dbReference>
<dbReference type="GO" id="GO:0033995">
    <property type="term" value="F:anhydrosialidase activity"/>
    <property type="evidence" value="ECO:0007669"/>
    <property type="project" value="UniProtKB-EC"/>
</dbReference>
<dbReference type="GO" id="GO:0004308">
    <property type="term" value="F:exo-alpha-sialidase activity"/>
    <property type="evidence" value="ECO:0007669"/>
    <property type="project" value="InterPro"/>
</dbReference>
<dbReference type="GO" id="GO:0006689">
    <property type="term" value="P:ganglioside catabolic process"/>
    <property type="evidence" value="ECO:0007669"/>
    <property type="project" value="TreeGrafter"/>
</dbReference>
<dbReference type="GO" id="GO:0009313">
    <property type="term" value="P:oligosaccharide catabolic process"/>
    <property type="evidence" value="ECO:0007669"/>
    <property type="project" value="TreeGrafter"/>
</dbReference>
<dbReference type="CDD" id="cd15482">
    <property type="entry name" value="Sialidase_non-viral"/>
    <property type="match status" value="1"/>
</dbReference>
<dbReference type="Gene3D" id="2.120.10.10">
    <property type="match status" value="1"/>
</dbReference>
<dbReference type="Gene3D" id="2.60.120.200">
    <property type="match status" value="1"/>
</dbReference>
<dbReference type="Gene3D" id="2.40.220.10">
    <property type="entry name" value="Intramolecular Trans-sialidase, Domain 3"/>
    <property type="match status" value="1"/>
</dbReference>
<dbReference type="InterPro" id="IPR013320">
    <property type="entry name" value="ConA-like_dom_sf"/>
</dbReference>
<dbReference type="InterPro" id="IPR004124">
    <property type="entry name" value="Glyco_hydro_33_N"/>
</dbReference>
<dbReference type="InterPro" id="IPR011040">
    <property type="entry name" value="Sialidase"/>
</dbReference>
<dbReference type="InterPro" id="IPR026856">
    <property type="entry name" value="Sialidase_fam"/>
</dbReference>
<dbReference type="InterPro" id="IPR036278">
    <property type="entry name" value="Sialidase_sf"/>
</dbReference>
<dbReference type="InterPro" id="IPR023364">
    <property type="entry name" value="Trans_sialidase_dom3"/>
</dbReference>
<dbReference type="PANTHER" id="PTHR10628:SF30">
    <property type="entry name" value="EXO-ALPHA-SIALIDASE"/>
    <property type="match status" value="1"/>
</dbReference>
<dbReference type="PANTHER" id="PTHR10628">
    <property type="entry name" value="SIALIDASE"/>
    <property type="match status" value="1"/>
</dbReference>
<dbReference type="Pfam" id="PF13088">
    <property type="entry name" value="BNR_2"/>
    <property type="match status" value="1"/>
</dbReference>
<dbReference type="Pfam" id="PF02973">
    <property type="entry name" value="Sialidase"/>
    <property type="match status" value="1"/>
</dbReference>
<dbReference type="SUPFAM" id="SSF49899">
    <property type="entry name" value="Concanavalin A-like lectins/glucanases"/>
    <property type="match status" value="1"/>
</dbReference>
<dbReference type="SUPFAM" id="SSF50939">
    <property type="entry name" value="Sialidases"/>
    <property type="match status" value="1"/>
</dbReference>
<proteinExistence type="evidence at protein level"/>
<accession>Q27701</accession>
<accession>Q9TWN0</accession>
<accession>Q9TWN1</accession>
<accession>Q9TWN2</accession>
<sequence length="762" mass="82982">MGRIGKKAMAIALVSAVMVTPLNVCATVENQEQQQVTQGAEDIAVIDDAQETVAADEAQADEAAAITVEGRETAEESSASIPEGILMEKNNVDIAEGQGYSLDQEAGAKYVKAMTQGTIILSYKSTSENGIQSLFSVGNSTAGNQDRHFHIYITNSGGIGIELRNTDGVFNYTLDRPASVRALYKGERVFNTVALKADAANKQCRLFANGELLATLDKDAFKFISDITGVDNVTLGGTKRQGKIAYPFGGTIGDIKVYSNALSDEELIQATGVTTYGENIFYAGDVTESNYFRIPSLLTLSTGTVISAADARYGGTHDSKSKINIAFAKSTDGGNTWSEPTLPLKFDDYIAKNIDWPRDSVGKNVQIQGSASYIDPVLLEDKLTKRIFLFADLMPAGIGSSNASVGSGFKEVNGKKYLKLRWHKDAGRAYDYTIREKGVIYNDATNQPTEFRVDGEYNLYQHDTNLTCKQYDYNFSGNNLIESKTDVDVNMNIFYKNSVFKAFPTNYLAMRYSDDEGASWSDLDIVSSFKPEVSKFLVVGPGIGKQISTGENAGRLLVPLYSKSSAELGFMYSDDHGDNWTYVEADNLTGGATAEAQIVEMPDGSLKTYLRTGSNCIAEVTSIDGGETWSDRVPLQGISTTSYGTQLSVINYSQPIDGKPAIILSSPNATNGRKNGKIWIGLVNDTGNTGIDKYSVEWKYSYAVDTPQMGYSYSCLAELPDGQVGLLYEKYDSWSRNELHLKDILKFEKYSISELTGQASGN</sequence>
<name>NANL_MACDE</name>
<organism>
    <name type="scientific">Macrobdella decora</name>
    <name type="common">North American leech</name>
    <dbReference type="NCBI Taxonomy" id="6405"/>
    <lineage>
        <taxon>Eukaryota</taxon>
        <taxon>Metazoa</taxon>
        <taxon>Spiralia</taxon>
        <taxon>Lophotrochozoa</taxon>
        <taxon>Annelida</taxon>
        <taxon>Clitellata</taxon>
        <taxon>Hirudinea</taxon>
        <taxon>Hirudinida</taxon>
        <taxon>Hirudiniformes</taxon>
        <taxon>Hirudinidae</taxon>
        <taxon>Macrobdella</taxon>
    </lineage>
</organism>
<keyword id="KW-0002">3D-structure</keyword>
<keyword id="KW-0903">Direct protein sequencing</keyword>
<keyword id="KW-0326">Glycosidase</keyword>
<keyword id="KW-0378">Hydrolase</keyword>
<keyword id="KW-0456">Lyase</keyword>
<keyword id="KW-0677">Repeat</keyword>
<keyword id="KW-0964">Secreted</keyword>
<keyword id="KW-0732">Signal</keyword>
<protein>
    <recommendedName>
        <fullName>Anhydrosialidase</fullName>
        <ecNumber>4.2.2.15</ecNumber>
    </recommendedName>
    <alternativeName>
        <fullName>Anhydroneuraminidase</fullName>
    </alternativeName>
    <alternativeName>
        <fullName>Sialidase L</fullName>
    </alternativeName>
</protein>
<comment type="catalytic activity">
    <reaction>
        <text>Elimination of alpha-sialyl groups in N-acetylneuraminic acid glycosides, releasing 2,7-anhydro-alpha-N-acetylneuraminate.</text>
        <dbReference type="EC" id="4.2.2.15"/>
    </reaction>
</comment>
<comment type="subcellular location">
    <subcellularLocation>
        <location>Secreted</location>
        <location>Extracellular space</location>
    </subcellularLocation>
</comment>
<comment type="similarity">
    <text evidence="2">Belongs to the glycosyl hydrolase 33 family.</text>
</comment>
<evidence type="ECO:0000255" key="1"/>
<evidence type="ECO:0000305" key="2"/>
<evidence type="ECO:0007829" key="3">
    <source>
        <dbReference type="PDB" id="2SLI"/>
    </source>
</evidence>
<feature type="signal peptide" evidence="1">
    <location>
        <begin position="1"/>
        <end position="27"/>
    </location>
</feature>
<feature type="chain" id="PRO_0000012040" description="Anhydrosialidase">
    <location>
        <begin position="28"/>
        <end position="762"/>
    </location>
</feature>
<feature type="repeat" description="BNR 1">
    <location>
        <begin position="328"/>
        <end position="339"/>
    </location>
</feature>
<feature type="repeat" description="BNR 2">
    <location>
        <begin position="511"/>
        <end position="522"/>
    </location>
</feature>
<feature type="repeat" description="BNR 3">
    <location>
        <begin position="571"/>
        <end position="582"/>
    </location>
</feature>
<feature type="repeat" description="BNR 4">
    <location>
        <begin position="620"/>
        <end position="631"/>
    </location>
</feature>
<feature type="active site" description="Proton acceptor">
    <location>
        <position position="318"/>
    </location>
</feature>
<feature type="active site">
    <location>
        <position position="595"/>
    </location>
</feature>
<feature type="active site" description="Nucleophile">
    <location>
        <position position="713"/>
    </location>
</feature>
<feature type="binding site">
    <location>
        <position position="293"/>
    </location>
    <ligand>
        <name>substrate</name>
    </ligand>
</feature>
<feature type="binding site">
    <location>
        <position position="611"/>
    </location>
    <ligand>
        <name>substrate</name>
    </ligand>
</feature>
<feature type="binding site">
    <location>
        <position position="673"/>
    </location>
    <ligand>
        <name>substrate</name>
    </ligand>
</feature>
<feature type="strand" evidence="3">
    <location>
        <begin position="83"/>
        <end position="94"/>
    </location>
</feature>
<feature type="turn" evidence="3">
    <location>
        <begin position="96"/>
        <end position="98"/>
    </location>
</feature>
<feature type="helix" evidence="3">
    <location>
        <begin position="108"/>
        <end position="111"/>
    </location>
</feature>
<feature type="strand" evidence="3">
    <location>
        <begin position="115"/>
        <end position="125"/>
    </location>
</feature>
<feature type="strand" evidence="3">
    <location>
        <begin position="130"/>
        <end position="138"/>
    </location>
</feature>
<feature type="strand" evidence="3">
    <location>
        <begin position="147"/>
        <end position="154"/>
    </location>
</feature>
<feature type="strand" evidence="3">
    <location>
        <begin position="159"/>
        <end position="165"/>
    </location>
</feature>
<feature type="turn" evidence="3">
    <location>
        <begin position="167"/>
        <end position="169"/>
    </location>
</feature>
<feature type="strand" evidence="3">
    <location>
        <begin position="171"/>
        <end position="178"/>
    </location>
</feature>
<feature type="strand" evidence="3">
    <location>
        <begin position="182"/>
        <end position="184"/>
    </location>
</feature>
<feature type="strand" evidence="3">
    <location>
        <begin position="191"/>
        <end position="198"/>
    </location>
</feature>
<feature type="turn" evidence="3">
    <location>
        <begin position="199"/>
        <end position="202"/>
    </location>
</feature>
<feature type="strand" evidence="3">
    <location>
        <begin position="203"/>
        <end position="208"/>
    </location>
</feature>
<feature type="strand" evidence="3">
    <location>
        <begin position="211"/>
        <end position="217"/>
    </location>
</feature>
<feature type="helix" evidence="3">
    <location>
        <begin position="224"/>
        <end position="226"/>
    </location>
</feature>
<feature type="strand" evidence="3">
    <location>
        <begin position="232"/>
        <end position="240"/>
    </location>
</feature>
<feature type="strand" evidence="3">
    <location>
        <begin position="243"/>
        <end position="246"/>
    </location>
</feature>
<feature type="strand" evidence="3">
    <location>
        <begin position="250"/>
        <end position="260"/>
    </location>
</feature>
<feature type="helix" evidence="3">
    <location>
        <begin position="264"/>
        <end position="271"/>
    </location>
</feature>
<feature type="strand" evidence="3">
    <location>
        <begin position="290"/>
        <end position="299"/>
    </location>
</feature>
<feature type="strand" evidence="3">
    <location>
        <begin position="305"/>
        <end position="314"/>
    </location>
</feature>
<feature type="strand" evidence="3">
    <location>
        <begin position="319"/>
        <end position="321"/>
    </location>
</feature>
<feature type="strand" evidence="3">
    <location>
        <begin position="323"/>
        <end position="332"/>
    </location>
</feature>
<feature type="strand" evidence="3">
    <location>
        <begin position="341"/>
        <end position="344"/>
    </location>
</feature>
<feature type="helix" evidence="3">
    <location>
        <begin position="362"/>
        <end position="364"/>
    </location>
</feature>
<feature type="strand" evidence="3">
    <location>
        <begin position="372"/>
        <end position="381"/>
    </location>
</feature>
<feature type="turn" evidence="3">
    <location>
        <begin position="382"/>
        <end position="385"/>
    </location>
</feature>
<feature type="strand" evidence="3">
    <location>
        <begin position="386"/>
        <end position="394"/>
    </location>
</feature>
<feature type="helix" evidence="3">
    <location>
        <begin position="400"/>
        <end position="402"/>
    </location>
</feature>
<feature type="strand" evidence="3">
    <location>
        <begin position="408"/>
        <end position="412"/>
    </location>
</feature>
<feature type="strand" evidence="3">
    <location>
        <begin position="415"/>
        <end position="422"/>
    </location>
</feature>
<feature type="strand" evidence="3">
    <location>
        <begin position="432"/>
        <end position="434"/>
    </location>
</feature>
<feature type="helix" evidence="3">
    <location>
        <begin position="436"/>
        <end position="438"/>
    </location>
</feature>
<feature type="strand" evidence="3">
    <location>
        <begin position="439"/>
        <end position="442"/>
    </location>
</feature>
<feature type="turn" evidence="3">
    <location>
        <begin position="443"/>
        <end position="446"/>
    </location>
</feature>
<feature type="strand" evidence="3">
    <location>
        <begin position="447"/>
        <end position="453"/>
    </location>
</feature>
<feature type="strand" evidence="3">
    <location>
        <begin position="458"/>
        <end position="461"/>
    </location>
</feature>
<feature type="strand" evidence="3">
    <location>
        <begin position="467"/>
        <end position="476"/>
    </location>
</feature>
<feature type="strand" evidence="3">
    <location>
        <begin position="479"/>
        <end position="490"/>
    </location>
</feature>
<feature type="strand" evidence="3">
    <location>
        <begin position="499"/>
        <end position="502"/>
    </location>
</feature>
<feature type="strand" evidence="3">
    <location>
        <begin position="507"/>
        <end position="515"/>
    </location>
</feature>
<feature type="helix" evidence="3">
    <location>
        <begin position="527"/>
        <end position="529"/>
    </location>
</feature>
<feature type="strand" evidence="3">
    <location>
        <begin position="535"/>
        <end position="539"/>
    </location>
</feature>
<feature type="strand" evidence="3">
    <location>
        <begin position="541"/>
        <end position="543"/>
    </location>
</feature>
<feature type="turn" evidence="3">
    <location>
        <begin position="551"/>
        <end position="554"/>
    </location>
</feature>
<feature type="strand" evidence="3">
    <location>
        <begin position="556"/>
        <end position="565"/>
    </location>
</feature>
<feature type="strand" evidence="3">
    <location>
        <begin position="567"/>
        <end position="575"/>
    </location>
</feature>
<feature type="strand" evidence="3">
    <location>
        <begin position="581"/>
        <end position="584"/>
    </location>
</feature>
<feature type="strand" evidence="3">
    <location>
        <begin position="596"/>
        <end position="600"/>
    </location>
</feature>
<feature type="strand" evidence="3">
    <location>
        <begin position="606"/>
        <end position="610"/>
    </location>
</feature>
<feature type="strand" evidence="3">
    <location>
        <begin position="613"/>
        <end position="616"/>
    </location>
</feature>
<feature type="strand" evidence="3">
    <location>
        <begin position="618"/>
        <end position="624"/>
    </location>
</feature>
<feature type="strand" evidence="3">
    <location>
        <begin position="648"/>
        <end position="656"/>
    </location>
</feature>
<feature type="strand" evidence="3">
    <location>
        <begin position="659"/>
        <end position="667"/>
    </location>
</feature>
<feature type="strand" evidence="3">
    <location>
        <begin position="670"/>
        <end position="674"/>
    </location>
</feature>
<feature type="strand" evidence="3">
    <location>
        <begin position="676"/>
        <end position="685"/>
    </location>
</feature>
<feature type="helix" evidence="3">
    <location>
        <begin position="690"/>
        <end position="692"/>
    </location>
</feature>
<feature type="strand" evidence="3">
    <location>
        <begin position="693"/>
        <end position="705"/>
    </location>
</feature>
<feature type="strand" evidence="3">
    <location>
        <begin position="714"/>
        <end position="718"/>
    </location>
</feature>
<feature type="strand" evidence="3">
    <location>
        <begin position="720"/>
        <end position="722"/>
    </location>
</feature>
<feature type="strand" evidence="3">
    <location>
        <begin position="724"/>
        <end position="729"/>
    </location>
</feature>
<feature type="strand" evidence="3">
    <location>
        <begin position="745"/>
        <end position="750"/>
    </location>
</feature>
<feature type="helix" evidence="3">
    <location>
        <begin position="752"/>
        <end position="755"/>
    </location>
</feature>
<reference key="1">
    <citation type="journal article" date="1996" name="J. Biol. Chem.">
        <title>Cloning and expression of sialidase L, a NeuAc-alpha2--&gt;3Gal-specific sialidase from the leech, Macrobdella decora.</title>
        <authorList>
            <person name="Chou M.-Y."/>
            <person name="Li S.-C."/>
            <person name="Li Y.-T."/>
        </authorList>
    </citation>
    <scope>NUCLEOTIDE SEQUENCE [MRNA]</scope>
</reference>
<reference key="2">
    <citation type="journal article" date="1994" name="J. Biol. Chem.">
        <title>Purification and characterization of sialidase L, a NeuAc-alpha 2--&gt;3Gal-specific sialidase.</title>
        <authorList>
            <person name="Chou M.-Y."/>
            <person name="Li S.-C."/>
            <person name="Kiso M."/>
            <person name="Hasegawa A."/>
            <person name="Li Y.-T."/>
        </authorList>
    </citation>
    <scope>PROTEIN SEQUENCE OF 89-104; 330-338; 346-352; 387-406; 429-435; 438-469 AND 512-530</scope>
    <scope>CHARACTERIZATION</scope>
</reference>
<reference key="3">
    <citation type="journal article" date="1998" name="Structure">
        <title>The crystal structure of an intramolecular trans-sialidase with a NeuAc-alpha2--&gt;3Gal specificity.</title>
        <authorList>
            <person name="Luo Y."/>
            <person name="Li S.-C."/>
            <person name="Chou M.-Y."/>
            <person name="Li Y.-T."/>
            <person name="Luo M."/>
        </authorList>
    </citation>
    <scope>X-RAY CRYSTALLOGRAPHY (2.0 ANGSTROMS) OF 81-759</scope>
</reference>
<reference key="4">
    <citation type="journal article" date="1999" name="J. Mol. Biol.">
        <title>The 1.8 A structures of leech intramolecular trans-sialidase complexes: evidence of its enzymatic mechanism.</title>
        <authorList>
            <person name="Luo Y."/>
            <person name="Li S.-C."/>
            <person name="Li Y.-T."/>
            <person name="Luo M."/>
        </authorList>
    </citation>
    <scope>X-RAY CRYSTALLOGRAPHY (1.8 ANGSTROMS) OF 81-759</scope>
</reference>